<proteinExistence type="evidence at protein level"/>
<organism>
    <name type="scientific">Mycobacterium tuberculosis (strain ATCC 25618 / H37Rv)</name>
    <dbReference type="NCBI Taxonomy" id="83332"/>
    <lineage>
        <taxon>Bacteria</taxon>
        <taxon>Bacillati</taxon>
        <taxon>Actinomycetota</taxon>
        <taxon>Actinomycetes</taxon>
        <taxon>Mycobacteriales</taxon>
        <taxon>Mycobacteriaceae</taxon>
        <taxon>Mycobacterium</taxon>
        <taxon>Mycobacterium tuberculosis complex</taxon>
    </lineage>
</organism>
<accession>P9WQ83</accession>
<accession>L0TC32</accession>
<accession>P63502</accession>
<accession>Q50672</accession>
<feature type="chain" id="PRO_0000163850" description="Putative cystathionine beta-lyase">
    <location>
        <begin position="1"/>
        <end position="407"/>
    </location>
</feature>
<feature type="modified residue" description="N6-(pyridoxal phosphate)lysine" evidence="1">
    <location>
        <position position="237"/>
    </location>
</feature>
<name>CBL_MYCTU</name>
<keyword id="KW-0028">Amino-acid biosynthesis</keyword>
<keyword id="KW-0456">Lyase</keyword>
<keyword id="KW-0486">Methionine biosynthesis</keyword>
<keyword id="KW-0663">Pyridoxal phosphate</keyword>
<keyword id="KW-1185">Reference proteome</keyword>
<evidence type="ECO:0000250" key="1"/>
<evidence type="ECO:0000305" key="2"/>
<dbReference type="EC" id="4.4.1.13"/>
<dbReference type="EMBL" id="AL123456">
    <property type="protein sequence ID" value="CCP45076.1"/>
    <property type="molecule type" value="Genomic_DNA"/>
</dbReference>
<dbReference type="PIR" id="B70733">
    <property type="entry name" value="B70733"/>
</dbReference>
<dbReference type="RefSeq" id="NP_216810.1">
    <property type="nucleotide sequence ID" value="NC_000962.3"/>
</dbReference>
<dbReference type="RefSeq" id="WP_003899255.1">
    <property type="nucleotide sequence ID" value="NZ_NVQJ01000012.1"/>
</dbReference>
<dbReference type="SMR" id="P9WQ83"/>
<dbReference type="FunCoup" id="P9WQ83">
    <property type="interactions" value="122"/>
</dbReference>
<dbReference type="STRING" id="83332.Rv2294"/>
<dbReference type="PaxDb" id="83332-Rv2294"/>
<dbReference type="GeneID" id="885868"/>
<dbReference type="KEGG" id="mtu:Rv2294"/>
<dbReference type="KEGG" id="mtv:RVBD_2294"/>
<dbReference type="TubercuList" id="Rv2294"/>
<dbReference type="eggNOG" id="COG1168">
    <property type="taxonomic scope" value="Bacteria"/>
</dbReference>
<dbReference type="InParanoid" id="P9WQ83"/>
<dbReference type="OrthoDB" id="3224382at2"/>
<dbReference type="PhylomeDB" id="P9WQ83"/>
<dbReference type="UniPathway" id="UPA00051">
    <property type="reaction ID" value="UER00078"/>
</dbReference>
<dbReference type="Proteomes" id="UP000001584">
    <property type="component" value="Chromosome"/>
</dbReference>
<dbReference type="GO" id="GO:0005886">
    <property type="term" value="C:plasma membrane"/>
    <property type="evidence" value="ECO:0007005"/>
    <property type="project" value="MTBBASE"/>
</dbReference>
<dbReference type="GO" id="GO:0047804">
    <property type="term" value="F:cysteine-S-conjugate beta-lyase activity"/>
    <property type="evidence" value="ECO:0007669"/>
    <property type="project" value="UniProtKB-EC"/>
</dbReference>
<dbReference type="GO" id="GO:0030170">
    <property type="term" value="F:pyridoxal phosphate binding"/>
    <property type="evidence" value="ECO:0007669"/>
    <property type="project" value="InterPro"/>
</dbReference>
<dbReference type="GO" id="GO:0009086">
    <property type="term" value="P:methionine biosynthetic process"/>
    <property type="evidence" value="ECO:0007669"/>
    <property type="project" value="UniProtKB-KW"/>
</dbReference>
<dbReference type="CDD" id="cd00609">
    <property type="entry name" value="AAT_like"/>
    <property type="match status" value="1"/>
</dbReference>
<dbReference type="FunFam" id="3.40.640.10:FF:000150">
    <property type="entry name" value="Cystathionine beta-lyase"/>
    <property type="match status" value="1"/>
</dbReference>
<dbReference type="Gene3D" id="3.90.1150.10">
    <property type="entry name" value="Aspartate Aminotransferase, domain 1"/>
    <property type="match status" value="1"/>
</dbReference>
<dbReference type="Gene3D" id="3.40.640.10">
    <property type="entry name" value="Type I PLP-dependent aspartate aminotransferase-like (Major domain)"/>
    <property type="match status" value="1"/>
</dbReference>
<dbReference type="InterPro" id="IPR004839">
    <property type="entry name" value="Aminotransferase_I/II_large"/>
</dbReference>
<dbReference type="InterPro" id="IPR051798">
    <property type="entry name" value="Class-II_PLP-Dep_Aminotrans"/>
</dbReference>
<dbReference type="InterPro" id="IPR015424">
    <property type="entry name" value="PyrdxlP-dep_Trfase"/>
</dbReference>
<dbReference type="InterPro" id="IPR015421">
    <property type="entry name" value="PyrdxlP-dep_Trfase_major"/>
</dbReference>
<dbReference type="InterPro" id="IPR015422">
    <property type="entry name" value="PyrdxlP-dep_Trfase_small"/>
</dbReference>
<dbReference type="PANTHER" id="PTHR43525:SF2">
    <property type="entry name" value="CYSTATHIONINE BETA-LYASE-RELATED"/>
    <property type="match status" value="1"/>
</dbReference>
<dbReference type="PANTHER" id="PTHR43525">
    <property type="entry name" value="PROTEIN MALY"/>
    <property type="match status" value="1"/>
</dbReference>
<dbReference type="Pfam" id="PF00155">
    <property type="entry name" value="Aminotran_1_2"/>
    <property type="match status" value="1"/>
</dbReference>
<dbReference type="SUPFAM" id="SSF53383">
    <property type="entry name" value="PLP-dependent transferases"/>
    <property type="match status" value="1"/>
</dbReference>
<reference key="1">
    <citation type="journal article" date="1998" name="Nature">
        <title>Deciphering the biology of Mycobacterium tuberculosis from the complete genome sequence.</title>
        <authorList>
            <person name="Cole S.T."/>
            <person name="Brosch R."/>
            <person name="Parkhill J."/>
            <person name="Garnier T."/>
            <person name="Churcher C.M."/>
            <person name="Harris D.E."/>
            <person name="Gordon S.V."/>
            <person name="Eiglmeier K."/>
            <person name="Gas S."/>
            <person name="Barry C.E. III"/>
            <person name="Tekaia F."/>
            <person name="Badcock K."/>
            <person name="Basham D."/>
            <person name="Brown D."/>
            <person name="Chillingworth T."/>
            <person name="Connor R."/>
            <person name="Davies R.M."/>
            <person name="Devlin K."/>
            <person name="Feltwell T."/>
            <person name="Gentles S."/>
            <person name="Hamlin N."/>
            <person name="Holroyd S."/>
            <person name="Hornsby T."/>
            <person name="Jagels K."/>
            <person name="Krogh A."/>
            <person name="McLean J."/>
            <person name="Moule S."/>
            <person name="Murphy L.D."/>
            <person name="Oliver S."/>
            <person name="Osborne J."/>
            <person name="Quail M.A."/>
            <person name="Rajandream M.A."/>
            <person name="Rogers J."/>
            <person name="Rutter S."/>
            <person name="Seeger K."/>
            <person name="Skelton S."/>
            <person name="Squares S."/>
            <person name="Squares R."/>
            <person name="Sulston J.E."/>
            <person name="Taylor K."/>
            <person name="Whitehead S."/>
            <person name="Barrell B.G."/>
        </authorList>
    </citation>
    <scope>NUCLEOTIDE SEQUENCE [LARGE SCALE GENOMIC DNA]</scope>
    <source>
        <strain>ATCC 25618 / H37Rv</strain>
    </source>
</reference>
<reference key="2">
    <citation type="journal article" date="2011" name="Mol. Cell. Proteomics">
        <title>Proteogenomic analysis of Mycobacterium tuberculosis by high resolution mass spectrometry.</title>
        <authorList>
            <person name="Kelkar D.S."/>
            <person name="Kumar D."/>
            <person name="Kumar P."/>
            <person name="Balakrishnan L."/>
            <person name="Muthusamy B."/>
            <person name="Yadav A.K."/>
            <person name="Shrivastava P."/>
            <person name="Marimuthu A."/>
            <person name="Anand S."/>
            <person name="Sundaram H."/>
            <person name="Kingsbury R."/>
            <person name="Harsha H.C."/>
            <person name="Nair B."/>
            <person name="Prasad T.S."/>
            <person name="Chauhan D.S."/>
            <person name="Katoch K."/>
            <person name="Katoch V.M."/>
            <person name="Kumar P."/>
            <person name="Chaerkady R."/>
            <person name="Ramachandran S."/>
            <person name="Dash D."/>
            <person name="Pandey A."/>
        </authorList>
    </citation>
    <scope>IDENTIFICATION BY MASS SPECTROMETRY [LARGE SCALE ANALYSIS]</scope>
    <source>
        <strain>ATCC 25618 / H37Rv</strain>
    </source>
</reference>
<comment type="catalytic activity">
    <reaction>
        <text>L,L-cystathionine + H2O = L-homocysteine + pyruvate + NH4(+)</text>
        <dbReference type="Rhea" id="RHEA:13965"/>
        <dbReference type="ChEBI" id="CHEBI:15361"/>
        <dbReference type="ChEBI" id="CHEBI:15377"/>
        <dbReference type="ChEBI" id="CHEBI:28938"/>
        <dbReference type="ChEBI" id="CHEBI:58161"/>
        <dbReference type="ChEBI" id="CHEBI:58199"/>
    </reaction>
</comment>
<comment type="catalytic activity">
    <reaction>
        <text>an S-substituted L-cysteine + H2O = a thiol + pyruvate + NH4(+)</text>
        <dbReference type="Rhea" id="RHEA:18121"/>
        <dbReference type="ChEBI" id="CHEBI:15361"/>
        <dbReference type="ChEBI" id="CHEBI:15377"/>
        <dbReference type="ChEBI" id="CHEBI:28938"/>
        <dbReference type="ChEBI" id="CHEBI:29256"/>
        <dbReference type="ChEBI" id="CHEBI:58717"/>
        <dbReference type="EC" id="4.4.1.13"/>
    </reaction>
</comment>
<comment type="cofactor">
    <cofactor evidence="1">
        <name>pyridoxal 5'-phosphate</name>
        <dbReference type="ChEBI" id="CHEBI:597326"/>
    </cofactor>
</comment>
<comment type="pathway">
    <text>Amino-acid biosynthesis; L-methionine biosynthesis via de novo pathway; L-homocysteine from L-cystathionine: step 1/1.</text>
</comment>
<comment type="similarity">
    <text evidence="2">Belongs to the class-II pyridoxal-phosphate-dependent aminotransferase family. MalY/PatB cystathionine beta-lyase subfamily.</text>
</comment>
<gene>
    <name type="ordered locus">Rv2294</name>
    <name type="ORF">MTCY339.16c</name>
</gene>
<sequence>MIPNPLEELTLEQLRSQRTSMKWRAHPADVLPLWVAEMDVKLPPTVADALRRAIDDGDTGYPYGTEYAEAVREFACQRWQWHDLEVSRTAIVPDVMLGIVEVLRLITDRGDPVIVNSPVYAPFYAFVSHDGRRVIPAPLRGDGRIDLDALQEAFSSARASSGSSGNVAYLLCNPHNPTGSVHTADELRGIAERAQRFGVRVVSDEIHAPLIPSGARFTPYLSVPGAENAFALMSASKAWNLGGLKAALAIAGREAAADLARMPEEVGHGPSHLGVIAHTAAFRTGGNWLDALLRGLDHNRTLLGALVDEHLPGVQYRWPQGTYLAWLDCRELGFDDAASDEMTEGLAVVSDLSGPARWFLDHARVALSSGHVFGIGGAGHVRINFATSRAILIEAVSRMSRSLLERR</sequence>
<protein>
    <recommendedName>
        <fullName>Putative cystathionine beta-lyase</fullName>
        <shortName>CBL</shortName>
        <ecNumber>4.4.1.13</ecNumber>
    </recommendedName>
    <alternativeName>
        <fullName>Beta-cystathionase</fullName>
    </alternativeName>
    <alternativeName>
        <fullName>Cysteine lyase</fullName>
    </alternativeName>
    <alternativeName>
        <fullName>Cysteine-S-conjugate beta-lyase</fullName>
    </alternativeName>
</protein>